<gene>
    <name evidence="1" type="primary">rplB</name>
    <name type="ordered locus">DNO_1272</name>
</gene>
<organism>
    <name type="scientific">Dichelobacter nodosus (strain VCS1703A)</name>
    <dbReference type="NCBI Taxonomy" id="246195"/>
    <lineage>
        <taxon>Bacteria</taxon>
        <taxon>Pseudomonadati</taxon>
        <taxon>Pseudomonadota</taxon>
        <taxon>Gammaproteobacteria</taxon>
        <taxon>Cardiobacteriales</taxon>
        <taxon>Cardiobacteriaceae</taxon>
        <taxon>Dichelobacter</taxon>
    </lineage>
</organism>
<sequence length="276" mass="30437">MAIINHKPTSPGRRGRVDVTRPELHKGKPFAALVEKKTRGSGRNNAGRITVRHKGGGHAQKYRLIDFCRNKDGIDAVVERLEYDPNRTSFIALLRYSDGERRYVIAARDMKAGDIVRNGEDAPIKDGNCLPMRNIPVGSTIYCVELKPGKGAQLARSAGASAQMVAREGKYVTVRLKSGERRLVLADCRAVLGEVSNHEHSLRSYGKAGAKRWLGIRPTVRGVVMNPVDHPHGGGEGRTASGRHPVSPWGLPTKGYKTRNNKRTDSLIVQRRKKRG</sequence>
<comment type="function">
    <text evidence="1">One of the primary rRNA binding proteins. Required for association of the 30S and 50S subunits to form the 70S ribosome, for tRNA binding and peptide bond formation. It has been suggested to have peptidyltransferase activity; this is somewhat controversial. Makes several contacts with the 16S rRNA in the 70S ribosome.</text>
</comment>
<comment type="subunit">
    <text evidence="1">Part of the 50S ribosomal subunit. Forms a bridge to the 30S subunit in the 70S ribosome.</text>
</comment>
<comment type="similarity">
    <text evidence="1">Belongs to the universal ribosomal protein uL2 family.</text>
</comment>
<proteinExistence type="inferred from homology"/>
<feature type="chain" id="PRO_0000309911" description="Large ribosomal subunit protein uL2">
    <location>
        <begin position="1"/>
        <end position="276"/>
    </location>
</feature>
<feature type="region of interest" description="Disordered" evidence="2">
    <location>
        <begin position="224"/>
        <end position="265"/>
    </location>
</feature>
<keyword id="KW-1185">Reference proteome</keyword>
<keyword id="KW-0687">Ribonucleoprotein</keyword>
<keyword id="KW-0689">Ribosomal protein</keyword>
<keyword id="KW-0694">RNA-binding</keyword>
<keyword id="KW-0699">rRNA-binding</keyword>
<dbReference type="EMBL" id="CP000513">
    <property type="protein sequence ID" value="ABQ13897.1"/>
    <property type="molecule type" value="Genomic_DNA"/>
</dbReference>
<dbReference type="RefSeq" id="WP_012031567.1">
    <property type="nucleotide sequence ID" value="NC_009446.1"/>
</dbReference>
<dbReference type="SMR" id="A5EX79"/>
<dbReference type="STRING" id="246195.DNO_1272"/>
<dbReference type="KEGG" id="dno:DNO_1272"/>
<dbReference type="eggNOG" id="COG0090">
    <property type="taxonomic scope" value="Bacteria"/>
</dbReference>
<dbReference type="HOGENOM" id="CLU_036235_2_1_6"/>
<dbReference type="OrthoDB" id="9778722at2"/>
<dbReference type="Proteomes" id="UP000000248">
    <property type="component" value="Chromosome"/>
</dbReference>
<dbReference type="GO" id="GO:0015934">
    <property type="term" value="C:large ribosomal subunit"/>
    <property type="evidence" value="ECO:0007669"/>
    <property type="project" value="InterPro"/>
</dbReference>
<dbReference type="GO" id="GO:0019843">
    <property type="term" value="F:rRNA binding"/>
    <property type="evidence" value="ECO:0007669"/>
    <property type="project" value="UniProtKB-UniRule"/>
</dbReference>
<dbReference type="GO" id="GO:0003735">
    <property type="term" value="F:structural constituent of ribosome"/>
    <property type="evidence" value="ECO:0007669"/>
    <property type="project" value="InterPro"/>
</dbReference>
<dbReference type="GO" id="GO:0016740">
    <property type="term" value="F:transferase activity"/>
    <property type="evidence" value="ECO:0007669"/>
    <property type="project" value="InterPro"/>
</dbReference>
<dbReference type="GO" id="GO:0002181">
    <property type="term" value="P:cytoplasmic translation"/>
    <property type="evidence" value="ECO:0007669"/>
    <property type="project" value="TreeGrafter"/>
</dbReference>
<dbReference type="FunFam" id="2.30.30.30:FF:000001">
    <property type="entry name" value="50S ribosomal protein L2"/>
    <property type="match status" value="1"/>
</dbReference>
<dbReference type="FunFam" id="2.40.50.140:FF:000003">
    <property type="entry name" value="50S ribosomal protein L2"/>
    <property type="match status" value="1"/>
</dbReference>
<dbReference type="FunFam" id="4.10.950.10:FF:000001">
    <property type="entry name" value="50S ribosomal protein L2"/>
    <property type="match status" value="1"/>
</dbReference>
<dbReference type="Gene3D" id="2.30.30.30">
    <property type="match status" value="1"/>
</dbReference>
<dbReference type="Gene3D" id="2.40.50.140">
    <property type="entry name" value="Nucleic acid-binding proteins"/>
    <property type="match status" value="1"/>
</dbReference>
<dbReference type="Gene3D" id="4.10.950.10">
    <property type="entry name" value="Ribosomal protein L2, domain 3"/>
    <property type="match status" value="1"/>
</dbReference>
<dbReference type="HAMAP" id="MF_01320_B">
    <property type="entry name" value="Ribosomal_uL2_B"/>
    <property type="match status" value="1"/>
</dbReference>
<dbReference type="InterPro" id="IPR012340">
    <property type="entry name" value="NA-bd_OB-fold"/>
</dbReference>
<dbReference type="InterPro" id="IPR014722">
    <property type="entry name" value="Rib_uL2_dom2"/>
</dbReference>
<dbReference type="InterPro" id="IPR002171">
    <property type="entry name" value="Ribosomal_uL2"/>
</dbReference>
<dbReference type="InterPro" id="IPR005880">
    <property type="entry name" value="Ribosomal_uL2_bac/org-type"/>
</dbReference>
<dbReference type="InterPro" id="IPR022669">
    <property type="entry name" value="Ribosomal_uL2_C"/>
</dbReference>
<dbReference type="InterPro" id="IPR022671">
    <property type="entry name" value="Ribosomal_uL2_CS"/>
</dbReference>
<dbReference type="InterPro" id="IPR014726">
    <property type="entry name" value="Ribosomal_uL2_dom3"/>
</dbReference>
<dbReference type="InterPro" id="IPR022666">
    <property type="entry name" value="Ribosomal_uL2_RNA-bd_dom"/>
</dbReference>
<dbReference type="InterPro" id="IPR008991">
    <property type="entry name" value="Translation_prot_SH3-like_sf"/>
</dbReference>
<dbReference type="NCBIfam" id="TIGR01171">
    <property type="entry name" value="rplB_bact"/>
    <property type="match status" value="1"/>
</dbReference>
<dbReference type="PANTHER" id="PTHR13691:SF5">
    <property type="entry name" value="LARGE RIBOSOMAL SUBUNIT PROTEIN UL2M"/>
    <property type="match status" value="1"/>
</dbReference>
<dbReference type="PANTHER" id="PTHR13691">
    <property type="entry name" value="RIBOSOMAL PROTEIN L2"/>
    <property type="match status" value="1"/>
</dbReference>
<dbReference type="Pfam" id="PF00181">
    <property type="entry name" value="Ribosomal_L2"/>
    <property type="match status" value="1"/>
</dbReference>
<dbReference type="Pfam" id="PF03947">
    <property type="entry name" value="Ribosomal_L2_C"/>
    <property type="match status" value="1"/>
</dbReference>
<dbReference type="PIRSF" id="PIRSF002158">
    <property type="entry name" value="Ribosomal_L2"/>
    <property type="match status" value="1"/>
</dbReference>
<dbReference type="SMART" id="SM01383">
    <property type="entry name" value="Ribosomal_L2"/>
    <property type="match status" value="1"/>
</dbReference>
<dbReference type="SMART" id="SM01382">
    <property type="entry name" value="Ribosomal_L2_C"/>
    <property type="match status" value="1"/>
</dbReference>
<dbReference type="SUPFAM" id="SSF50249">
    <property type="entry name" value="Nucleic acid-binding proteins"/>
    <property type="match status" value="1"/>
</dbReference>
<dbReference type="SUPFAM" id="SSF50104">
    <property type="entry name" value="Translation proteins SH3-like domain"/>
    <property type="match status" value="1"/>
</dbReference>
<dbReference type="PROSITE" id="PS00467">
    <property type="entry name" value="RIBOSOMAL_L2"/>
    <property type="match status" value="1"/>
</dbReference>
<protein>
    <recommendedName>
        <fullName evidence="1">Large ribosomal subunit protein uL2</fullName>
    </recommendedName>
    <alternativeName>
        <fullName evidence="3">50S ribosomal protein L2</fullName>
    </alternativeName>
</protein>
<accession>A5EX79</accession>
<name>RL2_DICNV</name>
<reference key="1">
    <citation type="journal article" date="2007" name="Nat. Biotechnol.">
        <title>Genome sequence and identification of candidate vaccine antigens from the animal pathogen Dichelobacter nodosus.</title>
        <authorList>
            <person name="Myers G.S.A."/>
            <person name="Parker D."/>
            <person name="Al-Hasani K."/>
            <person name="Kennan R.M."/>
            <person name="Seemann T."/>
            <person name="Ren Q."/>
            <person name="Badger J.H."/>
            <person name="Selengut J.D."/>
            <person name="Deboy R.T."/>
            <person name="Tettelin H."/>
            <person name="Boyce J.D."/>
            <person name="McCarl V.P."/>
            <person name="Han X."/>
            <person name="Nelson W.C."/>
            <person name="Madupu R."/>
            <person name="Mohamoud Y."/>
            <person name="Holley T."/>
            <person name="Fedorova N."/>
            <person name="Khouri H."/>
            <person name="Bottomley S.P."/>
            <person name="Whittington R.J."/>
            <person name="Adler B."/>
            <person name="Songer J.G."/>
            <person name="Rood J.I."/>
            <person name="Paulsen I.T."/>
        </authorList>
    </citation>
    <scope>NUCLEOTIDE SEQUENCE [LARGE SCALE GENOMIC DNA]</scope>
    <source>
        <strain>VCS1703A</strain>
    </source>
</reference>
<evidence type="ECO:0000255" key="1">
    <source>
        <dbReference type="HAMAP-Rule" id="MF_01320"/>
    </source>
</evidence>
<evidence type="ECO:0000256" key="2">
    <source>
        <dbReference type="SAM" id="MobiDB-lite"/>
    </source>
</evidence>
<evidence type="ECO:0000305" key="3"/>